<comment type="catalytic activity">
    <reaction evidence="1">
        <text>tRNA(His) + L-histidine + ATP = L-histidyl-tRNA(His) + AMP + diphosphate + H(+)</text>
        <dbReference type="Rhea" id="RHEA:17313"/>
        <dbReference type="Rhea" id="RHEA-COMP:9665"/>
        <dbReference type="Rhea" id="RHEA-COMP:9689"/>
        <dbReference type="ChEBI" id="CHEBI:15378"/>
        <dbReference type="ChEBI" id="CHEBI:30616"/>
        <dbReference type="ChEBI" id="CHEBI:33019"/>
        <dbReference type="ChEBI" id="CHEBI:57595"/>
        <dbReference type="ChEBI" id="CHEBI:78442"/>
        <dbReference type="ChEBI" id="CHEBI:78527"/>
        <dbReference type="ChEBI" id="CHEBI:456215"/>
        <dbReference type="EC" id="6.1.1.21"/>
    </reaction>
</comment>
<comment type="subunit">
    <text evidence="1">Homodimer.</text>
</comment>
<comment type="subcellular location">
    <subcellularLocation>
        <location evidence="1">Cytoplasm</location>
    </subcellularLocation>
</comment>
<comment type="similarity">
    <text evidence="1">Belongs to the class-II aminoacyl-tRNA synthetase family.</text>
</comment>
<organism>
    <name type="scientific">Geobacillus thermodenitrificans (strain NG80-2)</name>
    <dbReference type="NCBI Taxonomy" id="420246"/>
    <lineage>
        <taxon>Bacteria</taxon>
        <taxon>Bacillati</taxon>
        <taxon>Bacillota</taxon>
        <taxon>Bacilli</taxon>
        <taxon>Bacillales</taxon>
        <taxon>Anoxybacillaceae</taxon>
        <taxon>Geobacillus</taxon>
    </lineage>
</organism>
<evidence type="ECO:0000255" key="1">
    <source>
        <dbReference type="HAMAP-Rule" id="MF_00127"/>
    </source>
</evidence>
<dbReference type="EC" id="6.1.1.21" evidence="1"/>
<dbReference type="EMBL" id="CP000557">
    <property type="protein sequence ID" value="ABO67849.1"/>
    <property type="molecule type" value="Genomic_DNA"/>
</dbReference>
<dbReference type="RefSeq" id="WP_011887886.1">
    <property type="nucleotide sequence ID" value="NC_009328.1"/>
</dbReference>
<dbReference type="SMR" id="A4IR95"/>
<dbReference type="KEGG" id="gtn:GTNG_2504"/>
<dbReference type="eggNOG" id="COG0124">
    <property type="taxonomic scope" value="Bacteria"/>
</dbReference>
<dbReference type="HOGENOM" id="CLU_025113_1_1_9"/>
<dbReference type="Proteomes" id="UP000001578">
    <property type="component" value="Chromosome"/>
</dbReference>
<dbReference type="GO" id="GO:0005737">
    <property type="term" value="C:cytoplasm"/>
    <property type="evidence" value="ECO:0007669"/>
    <property type="project" value="UniProtKB-SubCell"/>
</dbReference>
<dbReference type="GO" id="GO:0005524">
    <property type="term" value="F:ATP binding"/>
    <property type="evidence" value="ECO:0007669"/>
    <property type="project" value="UniProtKB-UniRule"/>
</dbReference>
<dbReference type="GO" id="GO:0140096">
    <property type="term" value="F:catalytic activity, acting on a protein"/>
    <property type="evidence" value="ECO:0007669"/>
    <property type="project" value="UniProtKB-ARBA"/>
</dbReference>
<dbReference type="GO" id="GO:0004821">
    <property type="term" value="F:histidine-tRNA ligase activity"/>
    <property type="evidence" value="ECO:0007669"/>
    <property type="project" value="UniProtKB-UniRule"/>
</dbReference>
<dbReference type="GO" id="GO:0016740">
    <property type="term" value="F:transferase activity"/>
    <property type="evidence" value="ECO:0007669"/>
    <property type="project" value="UniProtKB-ARBA"/>
</dbReference>
<dbReference type="GO" id="GO:0006427">
    <property type="term" value="P:histidyl-tRNA aminoacylation"/>
    <property type="evidence" value="ECO:0007669"/>
    <property type="project" value="UniProtKB-UniRule"/>
</dbReference>
<dbReference type="CDD" id="cd00773">
    <property type="entry name" value="HisRS-like_core"/>
    <property type="match status" value="1"/>
</dbReference>
<dbReference type="CDD" id="cd00859">
    <property type="entry name" value="HisRS_anticodon"/>
    <property type="match status" value="1"/>
</dbReference>
<dbReference type="FunFam" id="3.30.930.10:FF:000005">
    <property type="entry name" value="Histidine--tRNA ligase"/>
    <property type="match status" value="1"/>
</dbReference>
<dbReference type="Gene3D" id="3.40.50.800">
    <property type="entry name" value="Anticodon-binding domain"/>
    <property type="match status" value="1"/>
</dbReference>
<dbReference type="Gene3D" id="3.30.930.10">
    <property type="entry name" value="Bira Bifunctional Protein, Domain 2"/>
    <property type="match status" value="1"/>
</dbReference>
<dbReference type="HAMAP" id="MF_00127">
    <property type="entry name" value="His_tRNA_synth"/>
    <property type="match status" value="1"/>
</dbReference>
<dbReference type="InterPro" id="IPR006195">
    <property type="entry name" value="aa-tRNA-synth_II"/>
</dbReference>
<dbReference type="InterPro" id="IPR045864">
    <property type="entry name" value="aa-tRNA-synth_II/BPL/LPL"/>
</dbReference>
<dbReference type="InterPro" id="IPR004154">
    <property type="entry name" value="Anticodon-bd"/>
</dbReference>
<dbReference type="InterPro" id="IPR036621">
    <property type="entry name" value="Anticodon-bd_dom_sf"/>
</dbReference>
<dbReference type="InterPro" id="IPR015807">
    <property type="entry name" value="His-tRNA-ligase"/>
</dbReference>
<dbReference type="InterPro" id="IPR041715">
    <property type="entry name" value="HisRS-like_core"/>
</dbReference>
<dbReference type="InterPro" id="IPR004516">
    <property type="entry name" value="HisRS/HisZ"/>
</dbReference>
<dbReference type="InterPro" id="IPR033656">
    <property type="entry name" value="HisRS_anticodon"/>
</dbReference>
<dbReference type="NCBIfam" id="TIGR00442">
    <property type="entry name" value="hisS"/>
    <property type="match status" value="1"/>
</dbReference>
<dbReference type="PANTHER" id="PTHR43707:SF1">
    <property type="entry name" value="HISTIDINE--TRNA LIGASE, MITOCHONDRIAL-RELATED"/>
    <property type="match status" value="1"/>
</dbReference>
<dbReference type="PANTHER" id="PTHR43707">
    <property type="entry name" value="HISTIDYL-TRNA SYNTHETASE"/>
    <property type="match status" value="1"/>
</dbReference>
<dbReference type="Pfam" id="PF03129">
    <property type="entry name" value="HGTP_anticodon"/>
    <property type="match status" value="1"/>
</dbReference>
<dbReference type="Pfam" id="PF13393">
    <property type="entry name" value="tRNA-synt_His"/>
    <property type="match status" value="1"/>
</dbReference>
<dbReference type="PIRSF" id="PIRSF001549">
    <property type="entry name" value="His-tRNA_synth"/>
    <property type="match status" value="1"/>
</dbReference>
<dbReference type="SUPFAM" id="SSF52954">
    <property type="entry name" value="Class II aaRS ABD-related"/>
    <property type="match status" value="1"/>
</dbReference>
<dbReference type="SUPFAM" id="SSF55681">
    <property type="entry name" value="Class II aaRS and biotin synthetases"/>
    <property type="match status" value="1"/>
</dbReference>
<dbReference type="PROSITE" id="PS50862">
    <property type="entry name" value="AA_TRNA_LIGASE_II"/>
    <property type="match status" value="1"/>
</dbReference>
<proteinExistence type="inferred from homology"/>
<gene>
    <name evidence="1" type="primary">hisS</name>
    <name type="ordered locus">GTNG_2504</name>
</gene>
<sequence length="426" mass="48009">MAFQIPRGTQDLLPGETEKWQYVEQVARDLCRRYGYEEIRTPIFEHTELFLRGVGDTTDIVQKEMYTFEDKGGRALTLRPEGTAPVVRAFVEHKLYGSPNQPVKLYYAGPMFRYERPEAGRFRQFVQFGVEAIGSSDPAIDAEVMALAMHIYKALGLKHIRLVINSLGDVDSRRAHREALVRHFSDRIHELCPDCQARLETNPLRILDCKKDRDHELMASAPSILDYLNDESSAYFEKVKQYLTMLDIPFVIDSRLVRGLDYYNHTTFEIMSEAEGFGAAATLCGGGRYNGLVQEIGGPETPGIGFALSIERLLAALEAEGIELPIHRGIDCYVVAVGERAKDETVRLVYELRRAGLRVEQDYLGRKMKAQLKAADRLGASFVAIIGDEELEKQTAAVKHMASGEQTDVPLGELASFLIERTKREE</sequence>
<reference key="1">
    <citation type="journal article" date="2007" name="Proc. Natl. Acad. Sci. U.S.A.">
        <title>Genome and proteome of long-chain alkane degrading Geobacillus thermodenitrificans NG80-2 isolated from a deep-subsurface oil reservoir.</title>
        <authorList>
            <person name="Feng L."/>
            <person name="Wang W."/>
            <person name="Cheng J."/>
            <person name="Ren Y."/>
            <person name="Zhao G."/>
            <person name="Gao C."/>
            <person name="Tang Y."/>
            <person name="Liu X."/>
            <person name="Han W."/>
            <person name="Peng X."/>
            <person name="Liu R."/>
            <person name="Wang L."/>
        </authorList>
    </citation>
    <scope>NUCLEOTIDE SEQUENCE [LARGE SCALE GENOMIC DNA]</scope>
    <source>
        <strain>NG80-2</strain>
    </source>
</reference>
<feature type="chain" id="PRO_1000016367" description="Histidine--tRNA ligase">
    <location>
        <begin position="1"/>
        <end position="426"/>
    </location>
</feature>
<keyword id="KW-0030">Aminoacyl-tRNA synthetase</keyword>
<keyword id="KW-0067">ATP-binding</keyword>
<keyword id="KW-0963">Cytoplasm</keyword>
<keyword id="KW-0436">Ligase</keyword>
<keyword id="KW-0547">Nucleotide-binding</keyword>
<keyword id="KW-0648">Protein biosynthesis</keyword>
<name>SYH_GEOTN</name>
<accession>A4IR95</accession>
<protein>
    <recommendedName>
        <fullName evidence="1">Histidine--tRNA ligase</fullName>
        <ecNumber evidence="1">6.1.1.21</ecNumber>
    </recommendedName>
    <alternativeName>
        <fullName evidence="1">Histidyl-tRNA synthetase</fullName>
        <shortName evidence="1">HisRS</shortName>
    </alternativeName>
</protein>